<feature type="chain" id="PRO_0000198811" description="3',5'-cyclic-AMP phosphodiesterase 4C">
    <location>
        <begin position="1"/>
        <end position="712"/>
    </location>
</feature>
<feature type="domain" description="PDEase" evidence="4">
    <location>
        <begin position="312"/>
        <end position="641"/>
    </location>
</feature>
<feature type="region of interest" description="Disordered" evidence="5">
    <location>
        <begin position="1"/>
        <end position="31"/>
    </location>
</feature>
<feature type="region of interest" description="Disordered" evidence="5">
    <location>
        <begin position="45"/>
        <end position="64"/>
    </location>
</feature>
<feature type="region of interest" description="Disordered" evidence="5">
    <location>
        <begin position="181"/>
        <end position="200"/>
    </location>
</feature>
<feature type="region of interest" description="Disordered" evidence="5">
    <location>
        <begin position="636"/>
        <end position="655"/>
    </location>
</feature>
<feature type="region of interest" description="Disordered" evidence="5">
    <location>
        <begin position="664"/>
        <end position="712"/>
    </location>
</feature>
<feature type="compositionally biased region" description="Basic residues" evidence="5">
    <location>
        <begin position="17"/>
        <end position="31"/>
    </location>
</feature>
<feature type="compositionally biased region" description="Basic and acidic residues" evidence="5">
    <location>
        <begin position="48"/>
        <end position="64"/>
    </location>
</feature>
<feature type="compositionally biased region" description="Acidic residues" evidence="5">
    <location>
        <begin position="664"/>
        <end position="678"/>
    </location>
</feature>
<feature type="active site" description="Proton donor" evidence="1">
    <location>
        <position position="388"/>
    </location>
</feature>
<feature type="binding site" evidence="2">
    <location>
        <position position="388"/>
    </location>
    <ligand>
        <name>3',5'-cyclic AMP</name>
        <dbReference type="ChEBI" id="CHEBI:58165"/>
    </ligand>
</feature>
<feature type="binding site" evidence="1">
    <location>
        <position position="388"/>
    </location>
    <ligand>
        <name>AMP</name>
        <dbReference type="ChEBI" id="CHEBI:456215"/>
    </ligand>
</feature>
<feature type="binding site" evidence="1">
    <location>
        <position position="392"/>
    </location>
    <ligand>
        <name>AMP</name>
        <dbReference type="ChEBI" id="CHEBI:456215"/>
    </ligand>
</feature>
<feature type="binding site" evidence="6 11">
    <location>
        <position position="392"/>
    </location>
    <ligand>
        <name>Zn(2+)</name>
        <dbReference type="ChEBI" id="CHEBI:29105"/>
        <label>1</label>
    </ligand>
</feature>
<feature type="binding site" evidence="6 11">
    <location>
        <position position="428"/>
    </location>
    <ligand>
        <name>Zn(2+)</name>
        <dbReference type="ChEBI" id="CHEBI:29105"/>
        <label>1</label>
    </ligand>
</feature>
<feature type="binding site" evidence="1">
    <location>
        <position position="429"/>
    </location>
    <ligand>
        <name>AMP</name>
        <dbReference type="ChEBI" id="CHEBI:456215"/>
    </ligand>
</feature>
<feature type="binding site" evidence="6 11">
    <location>
        <position position="429"/>
    </location>
    <ligand>
        <name>Mg(2+)</name>
        <dbReference type="ChEBI" id="CHEBI:18420"/>
    </ligand>
</feature>
<feature type="binding site" evidence="1">
    <location>
        <position position="429"/>
    </location>
    <ligand>
        <name>Mn(2+)</name>
        <dbReference type="ChEBI" id="CHEBI:29035"/>
    </ligand>
</feature>
<feature type="binding site" evidence="6 11">
    <location>
        <position position="429"/>
    </location>
    <ligand>
        <name>Zn(2+)</name>
        <dbReference type="ChEBI" id="CHEBI:29105"/>
        <label>1</label>
    </ligand>
</feature>
<feature type="binding site" evidence="1">
    <location>
        <position position="429"/>
    </location>
    <ligand>
        <name>Zn(2+)</name>
        <dbReference type="ChEBI" id="CHEBI:29105"/>
        <label>2</label>
    </ligand>
</feature>
<feature type="binding site" evidence="1">
    <location>
        <position position="546"/>
    </location>
    <ligand>
        <name>AMP</name>
        <dbReference type="ChEBI" id="CHEBI:456215"/>
    </ligand>
</feature>
<feature type="binding site" evidence="6 11">
    <location>
        <position position="546"/>
    </location>
    <ligand>
        <name>Zn(2+)</name>
        <dbReference type="ChEBI" id="CHEBI:29105"/>
        <label>1</label>
    </ligand>
</feature>
<feature type="binding site" evidence="2">
    <location>
        <position position="597"/>
    </location>
    <ligand>
        <name>3',5'-cyclic AMP</name>
        <dbReference type="ChEBI" id="CHEBI:58165"/>
    </ligand>
</feature>
<feature type="binding site" evidence="1">
    <location>
        <position position="597"/>
    </location>
    <ligand>
        <name>AMP</name>
        <dbReference type="ChEBI" id="CHEBI:456215"/>
    </ligand>
</feature>
<feature type="binding site" evidence="2">
    <location>
        <position position="600"/>
    </location>
    <ligand>
        <name>3',5'-cyclic AMP</name>
        <dbReference type="ChEBI" id="CHEBI:58165"/>
    </ligand>
</feature>
<feature type="binding site" evidence="1">
    <location>
        <position position="600"/>
    </location>
    <ligand>
        <name>AMP</name>
        <dbReference type="ChEBI" id="CHEBI:456215"/>
    </ligand>
</feature>
<feature type="modified residue" description="Phosphoserine" evidence="3">
    <location>
        <position position="73"/>
    </location>
</feature>
<feature type="modified residue" description="Phosphoserine" evidence="3">
    <location>
        <position position="641"/>
    </location>
</feature>
<feature type="splice variant" id="VSP_004575" description="In isoform PDE4C2." evidence="8">
    <location>
        <begin position="1"/>
        <end position="106"/>
    </location>
</feature>
<feature type="splice variant" id="VSP_004574" description="In isoform PDE4C3." evidence="8">
    <original>MENLGVGEGAEACSRLSRSRGRHSMTRAPKHLWRQPRRPIRIQQRFYSDPDKSAGCRERDLSPRPELRKSRLSWPVSSCRR</original>
    <variation>MQGPPAPAPVPGPGSPRGSPRGSPGLFRKLLVNQSIRLQRRFTVAHPLC</variation>
    <location>
        <begin position="1"/>
        <end position="81"/>
    </location>
</feature>
<feature type="sequence variant" id="VAR_050473" description="In dbSNP:rs10413646.">
    <original>S</original>
    <variation>L</variation>
    <location>
        <position position="131"/>
    </location>
</feature>
<feature type="sequence variant" id="VAR_050474" description="In dbSNP:rs34503849.">
    <original>R</original>
    <variation>Q</variation>
    <location>
        <position position="289"/>
    </location>
</feature>
<feature type="sequence variant" id="VAR_034374" description="In dbSNP:rs2229228.">
    <original>R</original>
    <variation>Q</variation>
    <location>
        <position position="344"/>
    </location>
</feature>
<feature type="sequence variant" id="VAR_061497" description="In dbSNP:rs11879710.">
    <original>R</original>
    <variation>W</variation>
    <location>
        <position position="344"/>
    </location>
</feature>
<feature type="sequence conflict" description="In Ref. 2; AAD47053/AAD47054." evidence="8" ref="2">
    <original>K</original>
    <variation>N</variation>
    <location>
        <position position="204"/>
    </location>
</feature>
<feature type="sequence conflict" description="In Ref. 2; AAD47053/AAD47054." evidence="8" ref="2">
    <original>D</original>
    <variation>Y</variation>
    <location>
        <position position="211"/>
    </location>
</feature>
<feature type="sequence conflict" description="In Ref. 1; CAA86601." evidence="8" ref="1">
    <original>EL</original>
    <variation>DV</variation>
    <location>
        <begin position="339"/>
        <end position="340"/>
    </location>
</feature>
<feature type="sequence conflict" description="In Ref. 4; AAC83047." evidence="8" ref="4">
    <original>NSE</original>
    <variation>K</variation>
    <location>
        <begin position="444"/>
        <end position="446"/>
    </location>
</feature>
<feature type="sequence conflict" description="In Ref. 1; CAA86601." evidence="8" ref="1">
    <original>EL</original>
    <variation>DV</variation>
    <location>
        <begin position="446"/>
        <end position="447"/>
    </location>
</feature>
<feature type="helix" evidence="12">
    <location>
        <begin position="317"/>
        <end position="323"/>
    </location>
</feature>
<feature type="helix" evidence="12">
    <location>
        <begin position="324"/>
        <end position="326"/>
    </location>
</feature>
<feature type="helix" evidence="12">
    <location>
        <begin position="334"/>
        <end position="340"/>
    </location>
</feature>
<feature type="helix" evidence="12">
    <location>
        <begin position="345"/>
        <end position="356"/>
    </location>
</feature>
<feature type="helix" evidence="12">
    <location>
        <begin position="359"/>
        <end position="362"/>
    </location>
</feature>
<feature type="helix" evidence="12">
    <location>
        <begin position="367"/>
        <end position="379"/>
    </location>
</feature>
<feature type="strand" evidence="12">
    <location>
        <begin position="385"/>
        <end position="389"/>
    </location>
</feature>
<feature type="helix" evidence="12">
    <location>
        <begin position="390"/>
        <end position="404"/>
    </location>
</feature>
<feature type="helix" evidence="12">
    <location>
        <begin position="407"/>
        <end position="409"/>
    </location>
</feature>
<feature type="turn" evidence="12">
    <location>
        <begin position="410"/>
        <end position="412"/>
    </location>
</feature>
<feature type="helix" evidence="12">
    <location>
        <begin position="415"/>
        <end position="427"/>
    </location>
</feature>
<feature type="turn" evidence="12">
    <location>
        <begin position="428"/>
        <end position="431"/>
    </location>
</feature>
<feature type="helix" evidence="12">
    <location>
        <begin position="435"/>
        <end position="437"/>
    </location>
</feature>
<feature type="helix" evidence="12">
    <location>
        <begin position="456"/>
        <end position="467"/>
    </location>
</feature>
<feature type="helix" evidence="12">
    <location>
        <begin position="468"/>
        <end position="470"/>
    </location>
</feature>
<feature type="turn" evidence="12">
    <location>
        <begin position="476"/>
        <end position="479"/>
    </location>
</feature>
<feature type="helix" evidence="12">
    <location>
        <begin position="482"/>
        <end position="497"/>
    </location>
</feature>
<feature type="helix" evidence="12">
    <location>
        <begin position="501"/>
        <end position="503"/>
    </location>
</feature>
<feature type="helix" evidence="12">
    <location>
        <begin position="504"/>
        <end position="516"/>
    </location>
</feature>
<feature type="helix" evidence="12">
    <location>
        <begin position="531"/>
        <end position="546"/>
    </location>
</feature>
<feature type="helix" evidence="12">
    <location>
        <begin position="549"/>
        <end position="551"/>
    </location>
</feature>
<feature type="helix" evidence="12">
    <location>
        <begin position="554"/>
        <end position="569"/>
    </location>
</feature>
<feature type="helix" evidence="12">
    <location>
        <begin position="600"/>
        <end position="603"/>
    </location>
</feature>
<feature type="helix" evidence="12">
    <location>
        <begin position="605"/>
        <end position="616"/>
    </location>
</feature>
<feature type="turn" evidence="12">
    <location>
        <begin position="617"/>
        <end position="620"/>
    </location>
</feature>
<feature type="helix" evidence="12">
    <location>
        <begin position="621"/>
        <end position="630"/>
    </location>
</feature>
<proteinExistence type="evidence at protein level"/>
<keyword id="KW-0002">3D-structure</keyword>
<keyword id="KW-0025">Alternative splicing</keyword>
<keyword id="KW-0114">cAMP</keyword>
<keyword id="KW-0966">Cell projection</keyword>
<keyword id="KW-0969">Cilium</keyword>
<keyword id="KW-0378">Hydrolase</keyword>
<keyword id="KW-0464">Manganese</keyword>
<keyword id="KW-0479">Metal-binding</keyword>
<keyword id="KW-0597">Phosphoprotein</keyword>
<keyword id="KW-1267">Proteomics identification</keyword>
<keyword id="KW-1185">Reference proteome</keyword>
<keyword id="KW-0862">Zinc</keyword>
<accession>Q08493</accession>
<accession>B3KTC4</accession>
<accession>Q9UN44</accession>
<accession>Q9UN45</accession>
<accession>Q9UN46</accession>
<accession>Q9UPJ6</accession>
<sequence length="712" mass="79902">MENLGVGEGAEACSRLSRSRGRHSMTRAPKHLWRQPRRPIRIQQRFYSDPDKSAGCRERDLSPRPELRKSRLSWPVSSCRRFDLENGLSCGRRALDPQSSPGLGRIMQAPVPHSQRRESFLYRSDSDYELSPKAMSRNSSVASDLHGEDMIVTPFAQVLASLRTVRSNVAALARQQCLGAAKQGPVGNPSSSNQLPPAEDTGQKLALETLDELDWCLDQLETLQTRHSVGEMASNKFKRILNRELTHLSETSRSGNQVSEYISRTFLDQQTEVELPKVTAEEAPQPMSRISGLHGLCHSASLSSATVPRFGVQTDQEEQLAKELEDTNKWGLDVFKVAELSGNRPLTAIIFSIFQERDLLKTFQIPADTLATYLLMLEGHYHANVAYHNSLHAADVAQSTHVLLATPALEAVFTDLEILAALFASAIHDVDHPGVSNQFLINTNSELALMYNDASVLENHHLAVGFKLLQAENCDIFQNLSAKQRLSLRRMVIDMVLATDMSKHMNLLADLKTMVETKKVTSLGVLLLDNYSDRIQVLQNLVHCADLSNPTKPLPLYRQWTDRIMAEFFQQGDRERESGLDISPMCDKHTASVEKSQVGFIDYIAHPLWETWADLVHPDAQDLLDTLEDNREWYQSKIPRSPSDLTNPERDGPDRFQFELTLEEAEEEDEEEEEEGEETALAKEALELPDTELLSPEAGPDPGDLPLDNQRT</sequence>
<name>PDE4C_HUMAN</name>
<comment type="function">
    <text evidence="6 7">Hydrolyzes the second messenger cAMP, which is a key regulator of many important physiological processes.</text>
</comment>
<comment type="catalytic activity">
    <reaction evidence="7">
        <text>3',5'-cyclic AMP + H2O = AMP + H(+)</text>
        <dbReference type="Rhea" id="RHEA:25277"/>
        <dbReference type="ChEBI" id="CHEBI:15377"/>
        <dbReference type="ChEBI" id="CHEBI:15378"/>
        <dbReference type="ChEBI" id="CHEBI:58165"/>
        <dbReference type="ChEBI" id="CHEBI:456215"/>
        <dbReference type="EC" id="3.1.4.53"/>
    </reaction>
    <physiologicalReaction direction="left-to-right" evidence="9">
        <dbReference type="Rhea" id="RHEA:25278"/>
    </physiologicalReaction>
</comment>
<comment type="cofactor">
    <cofactor evidence="6">
        <name>Zn(2+)</name>
        <dbReference type="ChEBI" id="CHEBI:29105"/>
    </cofactor>
    <text evidence="6">Binds 2 divalent metal cations per subunit. Site 1 may preferentially bind zinc ions.</text>
</comment>
<comment type="cofactor">
    <cofactor evidence="6">
        <name>Mg(2+)</name>
        <dbReference type="ChEBI" id="CHEBI:18420"/>
    </cofactor>
    <cofactor evidence="1">
        <name>Mn(2+)</name>
        <dbReference type="ChEBI" id="CHEBI:29035"/>
    </cofactor>
    <text evidence="1 6">Binds 2 divalent metal cations per subunit (PubMed:17727341). Site 2 has a preference for magnesium and/or manganese ions (By similarity).</text>
</comment>
<comment type="activity regulation">
    <text evidence="7">Inhibited by rolipram.</text>
</comment>
<comment type="biophysicochemical properties">
    <kinetics>
        <KM evidence="7">1.5 uM for 3',5'-cyclic AMP</KM>
        <Vmax evidence="7">37.0 nmol/min/mg enzyme</Vmax>
    </kinetics>
</comment>
<comment type="pathway">
    <text evidence="9">Purine metabolism; 3',5'-cyclic AMP degradation; AMP from 3',5'-cyclic AMP: step 1/1.</text>
</comment>
<comment type="subunit">
    <text evidence="3">Part of a complex containing AKAP5, ADCY5, ADCY6 and PKD2.</text>
</comment>
<comment type="interaction">
    <interactant intactId="EBI-12169289">
        <id>Q08493-2</id>
    </interactant>
    <interactant intactId="EBI-742054">
        <id>Q96D03</id>
        <label>DDIT4L</label>
    </interactant>
    <organismsDiffer>false</organismsDiffer>
    <experiments>3</experiments>
</comment>
<comment type="interaction">
    <interactant intactId="EBI-12169289">
        <id>Q08493-2</id>
    </interactant>
    <interactant intactId="EBI-19954058">
        <id>O15499</id>
        <label>GSC2</label>
    </interactant>
    <organismsDiffer>false</organismsDiffer>
    <experiments>3</experiments>
</comment>
<comment type="interaction">
    <interactant intactId="EBI-12169289">
        <id>Q08493-2</id>
    </interactant>
    <interactant intactId="EBI-458344">
        <id>P26718</id>
        <label>KLRK1</label>
    </interactant>
    <organismsDiffer>false</organismsDiffer>
    <experiments>3</experiments>
</comment>
<comment type="interaction">
    <interactant intactId="EBI-12169289">
        <id>Q08493-2</id>
    </interactant>
    <interactant intactId="EBI-2864512">
        <id>P50221</id>
        <label>MEOX1</label>
    </interactant>
    <organismsDiffer>false</organismsDiffer>
    <experiments>3</experiments>
</comment>
<comment type="interaction">
    <interactant intactId="EBI-12169289">
        <id>Q08493-2</id>
    </interactant>
    <interactant intactId="EBI-16439278">
        <id>Q6FHY5</id>
        <label>MEOX2</label>
    </interactant>
    <organismsDiffer>false</organismsDiffer>
    <experiments>3</experiments>
</comment>
<comment type="interaction">
    <interactant intactId="EBI-12169289">
        <id>Q08493-2</id>
    </interactant>
    <interactant intactId="EBI-9057006">
        <id>Q9UJX0</id>
        <label>OSGIN1</label>
    </interactant>
    <organismsDiffer>false</organismsDiffer>
    <experiments>3</experiments>
</comment>
<comment type="interaction">
    <interactant intactId="EBI-12169289">
        <id>Q08493-2</id>
    </interactant>
    <interactant intactId="EBI-747278">
        <id>P26367</id>
        <label>PAX6</label>
    </interactant>
    <organismsDiffer>false</organismsDiffer>
    <experiments>3</experiments>
</comment>
<comment type="interaction">
    <interactant intactId="EBI-12169289">
        <id>Q08493-2</id>
    </interactant>
    <interactant intactId="EBI-750459">
        <id>P30626</id>
        <label>SRI</label>
    </interactant>
    <organismsDiffer>false</organismsDiffer>
    <experiments>3</experiments>
</comment>
<comment type="interaction">
    <interactant intactId="EBI-12169289">
        <id>Q08493-2</id>
    </interactant>
    <interactant intactId="EBI-8489342">
        <id>P59817</id>
        <label>ZNF280A</label>
    </interactant>
    <organismsDiffer>false</organismsDiffer>
    <experiments>3</experiments>
</comment>
<comment type="interaction">
    <interactant intactId="EBI-10225541">
        <id>Q08493-3</id>
    </interactant>
    <interactant intactId="EBI-750459">
        <id>P30626</id>
        <label>SRI</label>
    </interactant>
    <organismsDiffer>false</organismsDiffer>
    <experiments>3</experiments>
</comment>
<comment type="subcellular location">
    <subcellularLocation>
        <location evidence="3">Cell projection</location>
        <location evidence="3">Cilium</location>
    </subcellularLocation>
</comment>
<comment type="alternative products">
    <event type="alternative splicing"/>
    <isoform>
        <id>Q08493-1</id>
        <name>PDE4C1</name>
        <sequence type="displayed"/>
    </isoform>
    <isoform>
        <id>Q08493-2</id>
        <name>PDE4C2</name>
        <sequence type="described" ref="VSP_004575"/>
    </isoform>
    <isoform>
        <id>Q08493-3</id>
        <name>PDE4C3</name>
        <sequence type="described" ref="VSP_004574"/>
    </isoform>
    <isoform>
        <id>Q08493-4</id>
        <name>PDE4C4</name>
        <sequence type="not described"/>
    </isoform>
    <isoform>
        <id>Q08493-5</id>
        <name>PDE4C5</name>
        <sequence type="not described"/>
    </isoform>
    <isoform>
        <id>Q08493-6</id>
        <name>PDE4C6</name>
        <sequence type="not described"/>
    </isoform>
    <isoform>
        <id>Q08493-7</id>
        <name>PDE4C7</name>
        <sequence type="not described"/>
    </isoform>
</comment>
<comment type="tissue specificity">
    <text evidence="7">Expressed in various tissues but not in cells of the immune system.</text>
</comment>
<comment type="similarity">
    <text evidence="8">Belongs to the cyclic nucleotide phosphodiesterase family. PDE4 subfamily.</text>
</comment>
<gene>
    <name evidence="10" type="primary">PDE4C</name>
    <name type="synonym">DPDE1</name>
</gene>
<protein>
    <recommendedName>
        <fullName evidence="8">3',5'-cyclic-AMP phosphodiesterase 4C</fullName>
        <ecNumber evidence="7">3.1.4.53</ecNumber>
    </recommendedName>
    <alternativeName>
        <fullName>DPDE1</fullName>
    </alternativeName>
    <alternativeName>
        <fullName>PDE21</fullName>
    </alternativeName>
    <alternativeName>
        <fullName evidence="8">cAMP-specific phosphodiesterase 4C</fullName>
    </alternativeName>
</protein>
<dbReference type="EC" id="3.1.4.53" evidence="7"/>
<dbReference type="EMBL" id="Z46632">
    <property type="protein sequence ID" value="CAA86601.1"/>
    <property type="molecule type" value="mRNA"/>
</dbReference>
<dbReference type="EMBL" id="AF157816">
    <property type="protein sequence ID" value="AAD47053.1"/>
    <property type="molecule type" value="Genomic_DNA"/>
</dbReference>
<dbReference type="EMBL" id="AF157811">
    <property type="protein sequence ID" value="AAD47053.1"/>
    <property type="status" value="JOINED"/>
    <property type="molecule type" value="Genomic_DNA"/>
</dbReference>
<dbReference type="EMBL" id="AF157814">
    <property type="protein sequence ID" value="AAD47053.1"/>
    <property type="status" value="JOINED"/>
    <property type="molecule type" value="Genomic_DNA"/>
</dbReference>
<dbReference type="EMBL" id="AF157815">
    <property type="protein sequence ID" value="AAD47053.1"/>
    <property type="status" value="JOINED"/>
    <property type="molecule type" value="Genomic_DNA"/>
</dbReference>
<dbReference type="EMBL" id="AF157816">
    <property type="protein sequence ID" value="AAD47054.1"/>
    <property type="molecule type" value="Genomic_DNA"/>
</dbReference>
<dbReference type="EMBL" id="AF157812">
    <property type="protein sequence ID" value="AAD47054.1"/>
    <property type="status" value="JOINED"/>
    <property type="molecule type" value="Genomic_DNA"/>
</dbReference>
<dbReference type="EMBL" id="AF157814">
    <property type="protein sequence ID" value="AAD47054.1"/>
    <property type="status" value="JOINED"/>
    <property type="molecule type" value="Genomic_DNA"/>
</dbReference>
<dbReference type="EMBL" id="AF157815">
    <property type="protein sequence ID" value="AAD47054.1"/>
    <property type="status" value="JOINED"/>
    <property type="molecule type" value="Genomic_DNA"/>
</dbReference>
<dbReference type="EMBL" id="AF157816">
    <property type="protein sequence ID" value="AAD47055.1"/>
    <property type="molecule type" value="Genomic_DNA"/>
</dbReference>
<dbReference type="EMBL" id="AF157814">
    <property type="protein sequence ID" value="AAD47055.1"/>
    <property type="status" value="JOINED"/>
    <property type="molecule type" value="Genomic_DNA"/>
</dbReference>
<dbReference type="EMBL" id="AF157815">
    <property type="protein sequence ID" value="AAD47055.1"/>
    <property type="status" value="JOINED"/>
    <property type="molecule type" value="Genomic_DNA"/>
</dbReference>
<dbReference type="EMBL" id="AK095384">
    <property type="protein sequence ID" value="BAG53036.1"/>
    <property type="molecule type" value="mRNA"/>
</dbReference>
<dbReference type="EMBL" id="AC005759">
    <property type="protein sequence ID" value="AAC83047.1"/>
    <property type="molecule type" value="Genomic_DNA"/>
</dbReference>
<dbReference type="EMBL" id="CH471106">
    <property type="protein sequence ID" value="EAW84677.1"/>
    <property type="molecule type" value="Genomic_DNA"/>
</dbReference>
<dbReference type="EMBL" id="L20968">
    <property type="protein sequence ID" value="AAA03591.1"/>
    <property type="molecule type" value="mRNA"/>
</dbReference>
<dbReference type="CCDS" id="CCDS12373.1">
    <molecule id="Q08493-1"/>
</dbReference>
<dbReference type="CCDS" id="CCDS42523.1">
    <molecule id="Q08493-3"/>
</dbReference>
<dbReference type="CCDS" id="CCDS46016.1">
    <molecule id="Q08493-2"/>
</dbReference>
<dbReference type="PIR" id="S71626">
    <property type="entry name" value="S71626"/>
</dbReference>
<dbReference type="RefSeq" id="NP_000914.2">
    <molecule id="Q08493-1"/>
    <property type="nucleotide sequence ID" value="NM_000923.6"/>
</dbReference>
<dbReference type="RefSeq" id="NP_001092288.1">
    <molecule id="Q08493-3"/>
    <property type="nucleotide sequence ID" value="NM_001098818.4"/>
</dbReference>
<dbReference type="RefSeq" id="NP_001092289.1">
    <molecule id="Q08493-2"/>
    <property type="nucleotide sequence ID" value="NM_001098819.4"/>
</dbReference>
<dbReference type="RefSeq" id="NP_001317101.1">
    <molecule id="Q08493-1"/>
    <property type="nucleotide sequence ID" value="NM_001330172.2"/>
</dbReference>
<dbReference type="RefSeq" id="NP_001382203.1">
    <molecule id="Q08493-2"/>
    <property type="nucleotide sequence ID" value="NM_001395274.1"/>
</dbReference>
<dbReference type="RefSeq" id="NP_001401409.1">
    <molecule id="Q08493-1"/>
    <property type="nucleotide sequence ID" value="NM_001414480.1"/>
</dbReference>
<dbReference type="RefSeq" id="XP_011526358.1">
    <property type="nucleotide sequence ID" value="XM_011528056.2"/>
</dbReference>
<dbReference type="PDB" id="2QYM">
    <property type="method" value="X-ray"/>
    <property type="resolution" value="1.90 A"/>
    <property type="chains" value="A=306-663"/>
</dbReference>
<dbReference type="PDBsum" id="2QYM"/>
<dbReference type="SMR" id="Q08493"/>
<dbReference type="BioGRID" id="111169">
    <property type="interactions" value="10"/>
</dbReference>
<dbReference type="CORUM" id="Q08493"/>
<dbReference type="FunCoup" id="Q08493">
    <property type="interactions" value="526"/>
</dbReference>
<dbReference type="IntAct" id="Q08493">
    <property type="interactions" value="9"/>
</dbReference>
<dbReference type="STRING" id="9606.ENSP00000347689"/>
<dbReference type="BindingDB" id="Q08493"/>
<dbReference type="ChEMBL" id="CHEMBL291"/>
<dbReference type="DrugBank" id="DB01427">
    <property type="generic name" value="Amrinone"/>
</dbReference>
<dbReference type="DrugBank" id="DB00201">
    <property type="generic name" value="Caffeine"/>
</dbReference>
<dbReference type="DrugBank" id="DB05219">
    <property type="generic name" value="Crisaborole"/>
</dbReference>
<dbReference type="DrugBank" id="DB00651">
    <property type="generic name" value="Dyphylline"/>
</dbReference>
<dbReference type="DrugBank" id="DB16157">
    <property type="generic name" value="Ensifentrine"/>
</dbReference>
<dbReference type="DrugBank" id="DB06246">
    <property type="generic name" value="Exisulind"/>
</dbReference>
<dbReference type="DrugBank" id="DB05266">
    <property type="generic name" value="Ibudilast"/>
</dbReference>
<dbReference type="DrugBank" id="DB01088">
    <property type="generic name" value="Iloprost"/>
</dbReference>
<dbReference type="DrugBank" id="DB01791">
    <property type="generic name" value="Piclamilast"/>
</dbReference>
<dbReference type="DrugBank" id="DB01656">
    <property type="generic name" value="Roflumilast"/>
</dbReference>
<dbReference type="DrugBank" id="DB01954">
    <property type="generic name" value="Rolipram"/>
</dbReference>
<dbReference type="DrugBank" id="DB09283">
    <property type="generic name" value="Trapidil"/>
</dbReference>
<dbReference type="DrugCentral" id="Q08493"/>
<dbReference type="GuidetoPHARMACOLOGY" id="1302"/>
<dbReference type="GlyGen" id="Q08493">
    <property type="glycosylation" value="1 site, 1 O-linked glycan (1 site)"/>
</dbReference>
<dbReference type="iPTMnet" id="Q08493"/>
<dbReference type="PhosphoSitePlus" id="Q08493"/>
<dbReference type="BioMuta" id="PDE4C"/>
<dbReference type="DMDM" id="20141263"/>
<dbReference type="jPOST" id="Q08493"/>
<dbReference type="MassIVE" id="Q08493"/>
<dbReference type="PaxDb" id="9606-ENSP00000347689"/>
<dbReference type="PeptideAtlas" id="Q08493"/>
<dbReference type="ProteomicsDB" id="58615">
    <molecule id="Q08493-1"/>
</dbReference>
<dbReference type="ProteomicsDB" id="58616">
    <molecule id="Q08493-2"/>
</dbReference>
<dbReference type="ProteomicsDB" id="58617">
    <molecule id="Q08493-3"/>
</dbReference>
<dbReference type="Antibodypedia" id="27961">
    <property type="antibodies" value="226 antibodies from 31 providers"/>
</dbReference>
<dbReference type="DNASU" id="5143"/>
<dbReference type="Ensembl" id="ENST00000262805.17">
    <molecule id="Q08493-3"/>
    <property type="protein sequence ID" value="ENSP00000262805.10"/>
    <property type="gene ID" value="ENSG00000105650.23"/>
</dbReference>
<dbReference type="Ensembl" id="ENST00000447275.7">
    <molecule id="Q08493-2"/>
    <property type="protein sequence ID" value="ENSP00000402091.1"/>
    <property type="gene ID" value="ENSG00000105650.23"/>
</dbReference>
<dbReference type="Ensembl" id="ENST00000594465.7">
    <molecule id="Q08493-1"/>
    <property type="protein sequence ID" value="ENSP00000470210.1"/>
    <property type="gene ID" value="ENSG00000105650.23"/>
</dbReference>
<dbReference type="Ensembl" id="ENST00000594617.7">
    <molecule id="Q08493-1"/>
    <property type="protein sequence ID" value="ENSP00000469696.1"/>
    <property type="gene ID" value="ENSG00000105650.23"/>
</dbReference>
<dbReference type="GeneID" id="5143"/>
<dbReference type="KEGG" id="hsa:5143"/>
<dbReference type="MANE-Select" id="ENST00000262805.17">
    <molecule id="Q08493-3"/>
    <property type="protein sequence ID" value="ENSP00000262805.10"/>
    <property type="RefSeq nucleotide sequence ID" value="NM_001098818.4"/>
    <property type="RefSeq protein sequence ID" value="NP_001092288.1"/>
</dbReference>
<dbReference type="UCSC" id="uc002nii.5">
    <molecule id="Q08493-1"/>
    <property type="organism name" value="human"/>
</dbReference>
<dbReference type="AGR" id="HGNC:8782"/>
<dbReference type="CTD" id="5143"/>
<dbReference type="DisGeNET" id="5143"/>
<dbReference type="GeneCards" id="PDE4C"/>
<dbReference type="HGNC" id="HGNC:8782">
    <property type="gene designation" value="PDE4C"/>
</dbReference>
<dbReference type="HPA" id="ENSG00000105650">
    <property type="expression patterns" value="Tissue enhanced (tongue)"/>
</dbReference>
<dbReference type="MIM" id="600128">
    <property type="type" value="gene"/>
</dbReference>
<dbReference type="neXtProt" id="NX_Q08493"/>
<dbReference type="OpenTargets" id="ENSG00000105650"/>
<dbReference type="PharmGKB" id="PA264"/>
<dbReference type="VEuPathDB" id="HostDB:ENSG00000105650"/>
<dbReference type="eggNOG" id="KOG3689">
    <property type="taxonomic scope" value="Eukaryota"/>
</dbReference>
<dbReference type="GeneTree" id="ENSGT00940000162285"/>
<dbReference type="HOGENOM" id="CLU_005940_5_3_1"/>
<dbReference type="InParanoid" id="Q08493"/>
<dbReference type="OMA" id="SWPTSFY"/>
<dbReference type="OrthoDB" id="189220at2759"/>
<dbReference type="PAN-GO" id="Q08493">
    <property type="GO annotations" value="5 GO annotations based on evolutionary models"/>
</dbReference>
<dbReference type="PhylomeDB" id="Q08493"/>
<dbReference type="TreeFam" id="TF314638"/>
<dbReference type="BRENDA" id="3.1.4.53">
    <property type="organism ID" value="2681"/>
</dbReference>
<dbReference type="PathwayCommons" id="Q08493"/>
<dbReference type="Reactome" id="R-HSA-180024">
    <property type="pathway name" value="DARPP-32 events"/>
</dbReference>
<dbReference type="Reactome" id="R-HSA-418555">
    <property type="pathway name" value="G alpha (s) signalling events"/>
</dbReference>
<dbReference type="SignaLink" id="Q08493"/>
<dbReference type="SIGNOR" id="Q08493"/>
<dbReference type="UniPathway" id="UPA00762">
    <property type="reaction ID" value="UER00747"/>
</dbReference>
<dbReference type="BioGRID-ORCS" id="5143">
    <property type="hits" value="27 hits in 1152 CRISPR screens"/>
</dbReference>
<dbReference type="ChiTaRS" id="PDE4C">
    <property type="organism name" value="human"/>
</dbReference>
<dbReference type="EvolutionaryTrace" id="Q08493"/>
<dbReference type="GeneWiki" id="PDE4C"/>
<dbReference type="GenomeRNAi" id="5143"/>
<dbReference type="Pharos" id="Q08493">
    <property type="development level" value="Tclin"/>
</dbReference>
<dbReference type="PRO" id="PR:Q08493"/>
<dbReference type="Proteomes" id="UP000005640">
    <property type="component" value="Chromosome 19"/>
</dbReference>
<dbReference type="RNAct" id="Q08493">
    <property type="molecule type" value="protein"/>
</dbReference>
<dbReference type="Bgee" id="ENSG00000105650">
    <property type="expression patterns" value="Expressed in apex of heart and 96 other cell types or tissues"/>
</dbReference>
<dbReference type="ExpressionAtlas" id="Q08493">
    <property type="expression patterns" value="baseline and differential"/>
</dbReference>
<dbReference type="GO" id="GO:0005929">
    <property type="term" value="C:cilium"/>
    <property type="evidence" value="ECO:0000250"/>
    <property type="project" value="UniProtKB"/>
</dbReference>
<dbReference type="GO" id="GO:0005829">
    <property type="term" value="C:cytosol"/>
    <property type="evidence" value="ECO:0000304"/>
    <property type="project" value="Reactome"/>
</dbReference>
<dbReference type="GO" id="GO:0005615">
    <property type="term" value="C:extracellular space"/>
    <property type="evidence" value="ECO:0007005"/>
    <property type="project" value="UniProtKB"/>
</dbReference>
<dbReference type="GO" id="GO:0004115">
    <property type="term" value="F:3',5'-cyclic-AMP phosphodiesterase activity"/>
    <property type="evidence" value="ECO:0000314"/>
    <property type="project" value="UniProtKB"/>
</dbReference>
<dbReference type="GO" id="GO:0047555">
    <property type="term" value="F:3',5'-cyclic-GMP phosphodiesterase activity"/>
    <property type="evidence" value="ECO:0000318"/>
    <property type="project" value="GO_Central"/>
</dbReference>
<dbReference type="GO" id="GO:0046872">
    <property type="term" value="F:metal ion binding"/>
    <property type="evidence" value="ECO:0007669"/>
    <property type="project" value="UniProtKB-KW"/>
</dbReference>
<dbReference type="GO" id="GO:0006198">
    <property type="term" value="P:cAMP catabolic process"/>
    <property type="evidence" value="ECO:0007669"/>
    <property type="project" value="UniProtKB-UniPathway"/>
</dbReference>
<dbReference type="GO" id="GO:0019933">
    <property type="term" value="P:cAMP-mediated signaling"/>
    <property type="evidence" value="ECO:0000318"/>
    <property type="project" value="GO_Central"/>
</dbReference>
<dbReference type="CDD" id="cd00077">
    <property type="entry name" value="HDc"/>
    <property type="match status" value="1"/>
</dbReference>
<dbReference type="FunFam" id="1.10.1300.10:FF:000001">
    <property type="entry name" value="Phosphodiesterase"/>
    <property type="match status" value="1"/>
</dbReference>
<dbReference type="Gene3D" id="1.10.1300.10">
    <property type="entry name" value="3'5'-cyclic nucleotide phosphodiesterase, catalytic domain"/>
    <property type="match status" value="1"/>
</dbReference>
<dbReference type="InterPro" id="IPR003607">
    <property type="entry name" value="HD/PDEase_dom"/>
</dbReference>
<dbReference type="InterPro" id="IPR040844">
    <property type="entry name" value="PDE4_UCR"/>
</dbReference>
<dbReference type="InterPro" id="IPR023088">
    <property type="entry name" value="PDEase"/>
</dbReference>
<dbReference type="InterPro" id="IPR002073">
    <property type="entry name" value="PDEase_catalytic_dom"/>
</dbReference>
<dbReference type="InterPro" id="IPR036971">
    <property type="entry name" value="PDEase_catalytic_dom_sf"/>
</dbReference>
<dbReference type="InterPro" id="IPR023174">
    <property type="entry name" value="PDEase_CS"/>
</dbReference>
<dbReference type="PANTHER" id="PTHR11347">
    <property type="entry name" value="CYCLIC NUCLEOTIDE PHOSPHODIESTERASE"/>
    <property type="match status" value="1"/>
</dbReference>
<dbReference type="Pfam" id="PF18100">
    <property type="entry name" value="PDE4_UCR"/>
    <property type="match status" value="1"/>
</dbReference>
<dbReference type="Pfam" id="PF00233">
    <property type="entry name" value="PDEase_I"/>
    <property type="match status" value="1"/>
</dbReference>
<dbReference type="PRINTS" id="PR00387">
    <property type="entry name" value="PDIESTERASE1"/>
</dbReference>
<dbReference type="SMART" id="SM00471">
    <property type="entry name" value="HDc"/>
    <property type="match status" value="1"/>
</dbReference>
<dbReference type="SUPFAM" id="SSF109604">
    <property type="entry name" value="HD-domain/PDEase-like"/>
    <property type="match status" value="1"/>
</dbReference>
<dbReference type="PROSITE" id="PS00126">
    <property type="entry name" value="PDEASE_I_1"/>
    <property type="match status" value="1"/>
</dbReference>
<dbReference type="PROSITE" id="PS51845">
    <property type="entry name" value="PDEASE_I_2"/>
    <property type="match status" value="1"/>
</dbReference>
<organism>
    <name type="scientific">Homo sapiens</name>
    <name type="common">Human</name>
    <dbReference type="NCBI Taxonomy" id="9606"/>
    <lineage>
        <taxon>Eukaryota</taxon>
        <taxon>Metazoa</taxon>
        <taxon>Chordata</taxon>
        <taxon>Craniata</taxon>
        <taxon>Vertebrata</taxon>
        <taxon>Euteleostomi</taxon>
        <taxon>Mammalia</taxon>
        <taxon>Eutheria</taxon>
        <taxon>Euarchontoglires</taxon>
        <taxon>Primates</taxon>
        <taxon>Haplorrhini</taxon>
        <taxon>Catarrhini</taxon>
        <taxon>Hominidae</taxon>
        <taxon>Homo</taxon>
    </lineage>
</organism>
<evidence type="ECO:0000250" key="1">
    <source>
        <dbReference type="UniProtKB" id="Q07343"/>
    </source>
</evidence>
<evidence type="ECO:0000250" key="2">
    <source>
        <dbReference type="UniProtKB" id="Q08499"/>
    </source>
</evidence>
<evidence type="ECO:0000250" key="3">
    <source>
        <dbReference type="UniProtKB" id="Q3UEI1"/>
    </source>
</evidence>
<evidence type="ECO:0000255" key="4">
    <source>
        <dbReference type="PROSITE-ProRule" id="PRU01192"/>
    </source>
</evidence>
<evidence type="ECO:0000256" key="5">
    <source>
        <dbReference type="SAM" id="MobiDB-lite"/>
    </source>
</evidence>
<evidence type="ECO:0000269" key="6">
    <source>
    </source>
</evidence>
<evidence type="ECO:0000269" key="7">
    <source>
    </source>
</evidence>
<evidence type="ECO:0000305" key="8"/>
<evidence type="ECO:0000305" key="9">
    <source>
    </source>
</evidence>
<evidence type="ECO:0000312" key="10">
    <source>
        <dbReference type="HGNC" id="HGNC:8782"/>
    </source>
</evidence>
<evidence type="ECO:0007744" key="11">
    <source>
        <dbReference type="PDB" id="2QYM"/>
    </source>
</evidence>
<evidence type="ECO:0007829" key="12">
    <source>
        <dbReference type="PDB" id="2QYM"/>
    </source>
</evidence>
<reference key="1">
    <citation type="journal article" date="1995" name="FEBS Lett.">
        <title>Molecular cloning and functional expression in yeast of a human cAMP-specific phosphodiesterase subtype (PDE IV-C).</title>
        <authorList>
            <person name="Engels P."/>
            <person name="Sullivan M."/>
            <person name="Mueller T."/>
            <person name="Luebbert H."/>
        </authorList>
    </citation>
    <scope>NUCLEOTIDE SEQUENCE [MRNA] (ISOFORM PDE4C1)</scope>
    <scope>TISSUE SPECIFICITY</scope>
    <scope>FUNCTION</scope>
    <scope>CATALYTIC ACTIVITY</scope>
    <scope>ACTIVITY REGULATION</scope>
    <scope>BIOPHYSICOCHEMICAL PROPERTIES</scope>
    <source>
        <tissue>Substantia nigra</tissue>
    </source>
</reference>
<reference key="2">
    <citation type="journal article" date="1999" name="Cell. Signal.">
        <title>Genomic organisation of the human cyclic AMP-specific phosphodiesterase PDE4C gene and its chromosomal localisation to 19p13.1, between RAB3A and JUND.</title>
        <authorList>
            <person name="Sullivan M."/>
            <person name="Olsen A.S."/>
            <person name="Houslay M.D."/>
        </authorList>
    </citation>
    <scope>NUCLEOTIDE SEQUENCE [GENOMIC DNA] (ISOFORMS PDE4C1; PDE4C2 AND PDE4C3)</scope>
</reference>
<reference key="3">
    <citation type="journal article" date="2004" name="Nat. Genet.">
        <title>Complete sequencing and characterization of 21,243 full-length human cDNAs.</title>
        <authorList>
            <person name="Ota T."/>
            <person name="Suzuki Y."/>
            <person name="Nishikawa T."/>
            <person name="Otsuki T."/>
            <person name="Sugiyama T."/>
            <person name="Irie R."/>
            <person name="Wakamatsu A."/>
            <person name="Hayashi K."/>
            <person name="Sato H."/>
            <person name="Nagai K."/>
            <person name="Kimura K."/>
            <person name="Makita H."/>
            <person name="Sekine M."/>
            <person name="Obayashi M."/>
            <person name="Nishi T."/>
            <person name="Shibahara T."/>
            <person name="Tanaka T."/>
            <person name="Ishii S."/>
            <person name="Yamamoto J."/>
            <person name="Saito K."/>
            <person name="Kawai Y."/>
            <person name="Isono Y."/>
            <person name="Nakamura Y."/>
            <person name="Nagahari K."/>
            <person name="Murakami K."/>
            <person name="Yasuda T."/>
            <person name="Iwayanagi T."/>
            <person name="Wagatsuma M."/>
            <person name="Shiratori A."/>
            <person name="Sudo H."/>
            <person name="Hosoiri T."/>
            <person name="Kaku Y."/>
            <person name="Kodaira H."/>
            <person name="Kondo H."/>
            <person name="Sugawara M."/>
            <person name="Takahashi M."/>
            <person name="Kanda K."/>
            <person name="Yokoi T."/>
            <person name="Furuya T."/>
            <person name="Kikkawa E."/>
            <person name="Omura Y."/>
            <person name="Abe K."/>
            <person name="Kamihara K."/>
            <person name="Katsuta N."/>
            <person name="Sato K."/>
            <person name="Tanikawa M."/>
            <person name="Yamazaki M."/>
            <person name="Ninomiya K."/>
            <person name="Ishibashi T."/>
            <person name="Yamashita H."/>
            <person name="Murakawa K."/>
            <person name="Fujimori K."/>
            <person name="Tanai H."/>
            <person name="Kimata M."/>
            <person name="Watanabe M."/>
            <person name="Hiraoka S."/>
            <person name="Chiba Y."/>
            <person name="Ishida S."/>
            <person name="Ono Y."/>
            <person name="Takiguchi S."/>
            <person name="Watanabe S."/>
            <person name="Yosida M."/>
            <person name="Hotuta T."/>
            <person name="Kusano J."/>
            <person name="Kanehori K."/>
            <person name="Takahashi-Fujii A."/>
            <person name="Hara H."/>
            <person name="Tanase T.-O."/>
            <person name="Nomura Y."/>
            <person name="Togiya S."/>
            <person name="Komai F."/>
            <person name="Hara R."/>
            <person name="Takeuchi K."/>
            <person name="Arita M."/>
            <person name="Imose N."/>
            <person name="Musashino K."/>
            <person name="Yuuki H."/>
            <person name="Oshima A."/>
            <person name="Sasaki N."/>
            <person name="Aotsuka S."/>
            <person name="Yoshikawa Y."/>
            <person name="Matsunawa H."/>
            <person name="Ichihara T."/>
            <person name="Shiohata N."/>
            <person name="Sano S."/>
            <person name="Moriya S."/>
            <person name="Momiyama H."/>
            <person name="Satoh N."/>
            <person name="Takami S."/>
            <person name="Terashima Y."/>
            <person name="Suzuki O."/>
            <person name="Nakagawa S."/>
            <person name="Senoh A."/>
            <person name="Mizoguchi H."/>
            <person name="Goto Y."/>
            <person name="Shimizu F."/>
            <person name="Wakebe H."/>
            <person name="Hishigaki H."/>
            <person name="Watanabe T."/>
            <person name="Sugiyama A."/>
            <person name="Takemoto M."/>
            <person name="Kawakami B."/>
            <person name="Yamazaki M."/>
            <person name="Watanabe K."/>
            <person name="Kumagai A."/>
            <person name="Itakura S."/>
            <person name="Fukuzumi Y."/>
            <person name="Fujimori Y."/>
            <person name="Komiyama M."/>
            <person name="Tashiro H."/>
            <person name="Tanigami A."/>
            <person name="Fujiwara T."/>
            <person name="Ono T."/>
            <person name="Yamada K."/>
            <person name="Fujii Y."/>
            <person name="Ozaki K."/>
            <person name="Hirao M."/>
            <person name="Ohmori Y."/>
            <person name="Kawabata A."/>
            <person name="Hikiji T."/>
            <person name="Kobatake N."/>
            <person name="Inagaki H."/>
            <person name="Ikema Y."/>
            <person name="Okamoto S."/>
            <person name="Okitani R."/>
            <person name="Kawakami T."/>
            <person name="Noguchi S."/>
            <person name="Itoh T."/>
            <person name="Shigeta K."/>
            <person name="Senba T."/>
            <person name="Matsumura K."/>
            <person name="Nakajima Y."/>
            <person name="Mizuno T."/>
            <person name="Morinaga M."/>
            <person name="Sasaki M."/>
            <person name="Togashi T."/>
            <person name="Oyama M."/>
            <person name="Hata H."/>
            <person name="Watanabe M."/>
            <person name="Komatsu T."/>
            <person name="Mizushima-Sugano J."/>
            <person name="Satoh T."/>
            <person name="Shirai Y."/>
            <person name="Takahashi Y."/>
            <person name="Nakagawa K."/>
            <person name="Okumura K."/>
            <person name="Nagase T."/>
            <person name="Nomura N."/>
            <person name="Kikuchi H."/>
            <person name="Masuho Y."/>
            <person name="Yamashita R."/>
            <person name="Nakai K."/>
            <person name="Yada T."/>
            <person name="Nakamura Y."/>
            <person name="Ohara O."/>
            <person name="Isogai T."/>
            <person name="Sugano S."/>
        </authorList>
    </citation>
    <scope>NUCLEOTIDE SEQUENCE [LARGE SCALE MRNA] (ISOFORM PDE4C1)</scope>
    <source>
        <tissue>Tongue</tissue>
    </source>
</reference>
<reference key="4">
    <citation type="journal article" date="2004" name="Nature">
        <title>The DNA sequence and biology of human chromosome 19.</title>
        <authorList>
            <person name="Grimwood J."/>
            <person name="Gordon L.A."/>
            <person name="Olsen A.S."/>
            <person name="Terry A."/>
            <person name="Schmutz J."/>
            <person name="Lamerdin J.E."/>
            <person name="Hellsten U."/>
            <person name="Goodstein D."/>
            <person name="Couronne O."/>
            <person name="Tran-Gyamfi M."/>
            <person name="Aerts A."/>
            <person name="Altherr M."/>
            <person name="Ashworth L."/>
            <person name="Bajorek E."/>
            <person name="Black S."/>
            <person name="Branscomb E."/>
            <person name="Caenepeel S."/>
            <person name="Carrano A.V."/>
            <person name="Caoile C."/>
            <person name="Chan Y.M."/>
            <person name="Christensen M."/>
            <person name="Cleland C.A."/>
            <person name="Copeland A."/>
            <person name="Dalin E."/>
            <person name="Dehal P."/>
            <person name="Denys M."/>
            <person name="Detter J.C."/>
            <person name="Escobar J."/>
            <person name="Flowers D."/>
            <person name="Fotopulos D."/>
            <person name="Garcia C."/>
            <person name="Georgescu A.M."/>
            <person name="Glavina T."/>
            <person name="Gomez M."/>
            <person name="Gonzales E."/>
            <person name="Groza M."/>
            <person name="Hammon N."/>
            <person name="Hawkins T."/>
            <person name="Haydu L."/>
            <person name="Ho I."/>
            <person name="Huang W."/>
            <person name="Israni S."/>
            <person name="Jett J."/>
            <person name="Kadner K."/>
            <person name="Kimball H."/>
            <person name="Kobayashi A."/>
            <person name="Larionov V."/>
            <person name="Leem S.-H."/>
            <person name="Lopez F."/>
            <person name="Lou Y."/>
            <person name="Lowry S."/>
            <person name="Malfatti S."/>
            <person name="Martinez D."/>
            <person name="McCready P.M."/>
            <person name="Medina C."/>
            <person name="Morgan J."/>
            <person name="Nelson K."/>
            <person name="Nolan M."/>
            <person name="Ovcharenko I."/>
            <person name="Pitluck S."/>
            <person name="Pollard M."/>
            <person name="Popkie A.P."/>
            <person name="Predki P."/>
            <person name="Quan G."/>
            <person name="Ramirez L."/>
            <person name="Rash S."/>
            <person name="Retterer J."/>
            <person name="Rodriguez A."/>
            <person name="Rogers S."/>
            <person name="Salamov A."/>
            <person name="Salazar A."/>
            <person name="She X."/>
            <person name="Smith D."/>
            <person name="Slezak T."/>
            <person name="Solovyev V."/>
            <person name="Thayer N."/>
            <person name="Tice H."/>
            <person name="Tsai M."/>
            <person name="Ustaszewska A."/>
            <person name="Vo N."/>
            <person name="Wagner M."/>
            <person name="Wheeler J."/>
            <person name="Wu K."/>
            <person name="Xie G."/>
            <person name="Yang J."/>
            <person name="Dubchak I."/>
            <person name="Furey T.S."/>
            <person name="DeJong P."/>
            <person name="Dickson M."/>
            <person name="Gordon D."/>
            <person name="Eichler E.E."/>
            <person name="Pennacchio L.A."/>
            <person name="Richardson P."/>
            <person name="Stubbs L."/>
            <person name="Rokhsar D.S."/>
            <person name="Myers R.M."/>
            <person name="Rubin E.M."/>
            <person name="Lucas S.M."/>
        </authorList>
    </citation>
    <scope>NUCLEOTIDE SEQUENCE [LARGE SCALE GENOMIC DNA]</scope>
</reference>
<reference key="5">
    <citation type="submission" date="2005-07" db="EMBL/GenBank/DDBJ databases">
        <authorList>
            <person name="Mural R.J."/>
            <person name="Istrail S."/>
            <person name="Sutton G.G."/>
            <person name="Florea L."/>
            <person name="Halpern A.L."/>
            <person name="Mobarry C.M."/>
            <person name="Lippert R."/>
            <person name="Walenz B."/>
            <person name="Shatkay H."/>
            <person name="Dew I."/>
            <person name="Miller J.R."/>
            <person name="Flanigan M.J."/>
            <person name="Edwards N.J."/>
            <person name="Bolanos R."/>
            <person name="Fasulo D."/>
            <person name="Halldorsson B.V."/>
            <person name="Hannenhalli S."/>
            <person name="Turner R."/>
            <person name="Yooseph S."/>
            <person name="Lu F."/>
            <person name="Nusskern D.R."/>
            <person name="Shue B.C."/>
            <person name="Zheng X.H."/>
            <person name="Zhong F."/>
            <person name="Delcher A.L."/>
            <person name="Huson D.H."/>
            <person name="Kravitz S.A."/>
            <person name="Mouchard L."/>
            <person name="Reinert K."/>
            <person name="Remington K.A."/>
            <person name="Clark A.G."/>
            <person name="Waterman M.S."/>
            <person name="Eichler E.E."/>
            <person name="Adams M.D."/>
            <person name="Hunkapiller M.W."/>
            <person name="Myers E.W."/>
            <person name="Venter J.C."/>
        </authorList>
    </citation>
    <scope>NUCLEOTIDE SEQUENCE [LARGE SCALE GENOMIC DNA]</scope>
</reference>
<reference key="6">
    <citation type="journal article" date="1993" name="Mol. Cell. Biol.">
        <title>A family of human phosphodiesterases homologous to the dunce learning and memory gene product of Drosophila melanogaster are potential targets for antidepressant drugs.</title>
        <authorList>
            <person name="Bolger G."/>
            <person name="Michaeli T."/>
            <person name="Martins T."/>
            <person name="St John T."/>
            <person name="Steiner B."/>
            <person name="Rodgers L."/>
            <person name="Riggs M."/>
            <person name="Wigler M."/>
            <person name="Ferguson K."/>
        </authorList>
    </citation>
    <scope>NUCLEOTIDE SEQUENCE [MRNA] OF 462-712</scope>
</reference>
<reference evidence="11" key="7">
    <citation type="journal article" date="2007" name="Biochem. J.">
        <title>Structures of the four subfamilies of phosphodiesterase-4 provide insight into the selectivity of their inhibitors.</title>
        <authorList>
            <person name="Wang H."/>
            <person name="Peng M.-S."/>
            <person name="Chen Y."/>
            <person name="Geng J."/>
            <person name="Robinson H."/>
            <person name="Houslay M.D."/>
            <person name="Cai J."/>
            <person name="Ke H."/>
        </authorList>
    </citation>
    <scope>X-RAY CRYSTALLOGRAPHY (1.90 ANGSTROMS) OF 306-663 IN COMPLEX WITH ZINC AND MAGNESIUM</scope>
    <scope>FUNCTION</scope>
    <scope>COFACTOR</scope>
</reference>